<dbReference type="EMBL" id="CU928162">
    <property type="protein sequence ID" value="CAR06321.1"/>
    <property type="molecule type" value="Genomic_DNA"/>
</dbReference>
<dbReference type="RefSeq" id="WP_000014320.1">
    <property type="nucleotide sequence ID" value="NC_011745.1"/>
</dbReference>
<dbReference type="SMR" id="B7MNV6"/>
<dbReference type="GeneID" id="75169997"/>
<dbReference type="KEGG" id="ecq:ECED1_0098"/>
<dbReference type="HOGENOM" id="CLU_108853_0_0_6"/>
<dbReference type="Proteomes" id="UP000000748">
    <property type="component" value="Chromosome"/>
</dbReference>
<dbReference type="GO" id="GO:0005829">
    <property type="term" value="C:cytosol"/>
    <property type="evidence" value="ECO:0007669"/>
    <property type="project" value="UniProtKB-SubCell"/>
</dbReference>
<dbReference type="GO" id="GO:0042597">
    <property type="term" value="C:periplasmic space"/>
    <property type="evidence" value="ECO:0007669"/>
    <property type="project" value="UniProtKB-SubCell"/>
</dbReference>
<dbReference type="GO" id="GO:0045182">
    <property type="term" value="F:translation regulator activity"/>
    <property type="evidence" value="ECO:0007669"/>
    <property type="project" value="InterPro"/>
</dbReference>
<dbReference type="HAMAP" id="MF_01332">
    <property type="entry name" value="SecM"/>
    <property type="match status" value="1"/>
</dbReference>
<dbReference type="InterPro" id="IPR009502">
    <property type="entry name" value="SecM"/>
</dbReference>
<dbReference type="NCBIfam" id="NF002799">
    <property type="entry name" value="PRK02943.1-1"/>
    <property type="match status" value="1"/>
</dbReference>
<dbReference type="Pfam" id="PF06558">
    <property type="entry name" value="SecM"/>
    <property type="match status" value="1"/>
</dbReference>
<dbReference type="PIRSF" id="PIRSF004572">
    <property type="entry name" value="SecM"/>
    <property type="match status" value="1"/>
</dbReference>
<sequence>MSGILTRWRQFGKRYFWPHLLLGMVAASLGLPALSNAAEPNAPAKATTRNHEPSAKVNFGQLALLEANTRRPNSNYSVDYWHQHAIRTVIRHLSFAMAPQTLPVAEESLPLQAQHLALLDTLSALLTQEGTPSEKGYRIDYAHFTPQAKFSTPVWISQAQGIRAGPQRLS</sequence>
<feature type="signal peptide" evidence="1">
    <location>
        <begin position="1"/>
        <end position="37"/>
    </location>
</feature>
<feature type="chain" id="PRO_1000166097" description="Secretion monitor">
    <location>
        <begin position="38"/>
        <end position="170"/>
    </location>
</feature>
<accession>B7MNV6</accession>
<name>SECM_ECO81</name>
<proteinExistence type="inferred from homology"/>
<protein>
    <recommendedName>
        <fullName evidence="1">Secretion monitor</fullName>
    </recommendedName>
</protein>
<organism>
    <name type="scientific">Escherichia coli O81 (strain ED1a)</name>
    <dbReference type="NCBI Taxonomy" id="585397"/>
    <lineage>
        <taxon>Bacteria</taxon>
        <taxon>Pseudomonadati</taxon>
        <taxon>Pseudomonadota</taxon>
        <taxon>Gammaproteobacteria</taxon>
        <taxon>Enterobacterales</taxon>
        <taxon>Enterobacteriaceae</taxon>
        <taxon>Escherichia</taxon>
    </lineage>
</organism>
<comment type="function">
    <text evidence="1">Regulates secA expression by translational coupling of the secM secA operon. Translational pausing at a specific Pro residue 5 residues before the end of the protein may allow disruption of a mRNA repressor helix that normally suppresses secA translation initiation.</text>
</comment>
<comment type="subcellular location">
    <subcellularLocation>
        <location evidence="1">Cytoplasm</location>
        <location evidence="1">Cytosol</location>
    </subcellularLocation>
    <subcellularLocation>
        <location evidence="1">Periplasm</location>
    </subcellularLocation>
    <text evidence="1">The active form is cytosolic, while the periplasmic form is rapidly degraded, mainly by the tail-specific protease.</text>
</comment>
<comment type="similarity">
    <text evidence="1">Belongs to the SecM family.</text>
</comment>
<evidence type="ECO:0000255" key="1">
    <source>
        <dbReference type="HAMAP-Rule" id="MF_01332"/>
    </source>
</evidence>
<keyword id="KW-0963">Cytoplasm</keyword>
<keyword id="KW-0574">Periplasm</keyword>
<keyword id="KW-0732">Signal</keyword>
<reference key="1">
    <citation type="journal article" date="2009" name="PLoS Genet.">
        <title>Organised genome dynamics in the Escherichia coli species results in highly diverse adaptive paths.</title>
        <authorList>
            <person name="Touchon M."/>
            <person name="Hoede C."/>
            <person name="Tenaillon O."/>
            <person name="Barbe V."/>
            <person name="Baeriswyl S."/>
            <person name="Bidet P."/>
            <person name="Bingen E."/>
            <person name="Bonacorsi S."/>
            <person name="Bouchier C."/>
            <person name="Bouvet O."/>
            <person name="Calteau A."/>
            <person name="Chiapello H."/>
            <person name="Clermont O."/>
            <person name="Cruveiller S."/>
            <person name="Danchin A."/>
            <person name="Diard M."/>
            <person name="Dossat C."/>
            <person name="Karoui M.E."/>
            <person name="Frapy E."/>
            <person name="Garry L."/>
            <person name="Ghigo J.M."/>
            <person name="Gilles A.M."/>
            <person name="Johnson J."/>
            <person name="Le Bouguenec C."/>
            <person name="Lescat M."/>
            <person name="Mangenot S."/>
            <person name="Martinez-Jehanne V."/>
            <person name="Matic I."/>
            <person name="Nassif X."/>
            <person name="Oztas S."/>
            <person name="Petit M.A."/>
            <person name="Pichon C."/>
            <person name="Rouy Z."/>
            <person name="Ruf C.S."/>
            <person name="Schneider D."/>
            <person name="Tourret J."/>
            <person name="Vacherie B."/>
            <person name="Vallenet D."/>
            <person name="Medigue C."/>
            <person name="Rocha E.P.C."/>
            <person name="Denamur E."/>
        </authorList>
    </citation>
    <scope>NUCLEOTIDE SEQUENCE [LARGE SCALE GENOMIC DNA]</scope>
    <source>
        <strain>ED1a</strain>
    </source>
</reference>
<gene>
    <name evidence="1" type="primary">secM</name>
    <name type="ordered locus">ECED1_0098</name>
</gene>